<organism>
    <name type="scientific">Streptococcus pyogenes serotype M6 (strain ATCC BAA-946 / MGAS10394)</name>
    <dbReference type="NCBI Taxonomy" id="286636"/>
    <lineage>
        <taxon>Bacteria</taxon>
        <taxon>Bacillati</taxon>
        <taxon>Bacillota</taxon>
        <taxon>Bacilli</taxon>
        <taxon>Lactobacillales</taxon>
        <taxon>Streptococcaceae</taxon>
        <taxon>Streptococcus</taxon>
    </lineage>
</organism>
<comment type="function">
    <text evidence="1">Modulates transcription in response to changes in cellular NADH/NAD(+) redox state.</text>
</comment>
<comment type="subunit">
    <text evidence="1">Homodimer.</text>
</comment>
<comment type="subcellular location">
    <subcellularLocation>
        <location evidence="1">Cytoplasm</location>
    </subcellularLocation>
</comment>
<comment type="similarity">
    <text evidence="1">Belongs to the transcriptional regulatory Rex family.</text>
</comment>
<dbReference type="EMBL" id="CP000003">
    <property type="protein sequence ID" value="AAT86975.1"/>
    <property type="molecule type" value="Genomic_DNA"/>
</dbReference>
<dbReference type="RefSeq" id="WP_002984705.1">
    <property type="nucleotide sequence ID" value="NC_006086.1"/>
</dbReference>
<dbReference type="SMR" id="Q5XC88"/>
<dbReference type="KEGG" id="spa:M6_Spy0840"/>
<dbReference type="HOGENOM" id="CLU_061534_1_1_9"/>
<dbReference type="Proteomes" id="UP000001167">
    <property type="component" value="Chromosome"/>
</dbReference>
<dbReference type="GO" id="GO:0005737">
    <property type="term" value="C:cytoplasm"/>
    <property type="evidence" value="ECO:0007669"/>
    <property type="project" value="UniProtKB-SubCell"/>
</dbReference>
<dbReference type="GO" id="GO:0003677">
    <property type="term" value="F:DNA binding"/>
    <property type="evidence" value="ECO:0007669"/>
    <property type="project" value="UniProtKB-UniRule"/>
</dbReference>
<dbReference type="GO" id="GO:0003700">
    <property type="term" value="F:DNA-binding transcription factor activity"/>
    <property type="evidence" value="ECO:0007669"/>
    <property type="project" value="UniProtKB-UniRule"/>
</dbReference>
<dbReference type="GO" id="GO:0045892">
    <property type="term" value="P:negative regulation of DNA-templated transcription"/>
    <property type="evidence" value="ECO:0007669"/>
    <property type="project" value="InterPro"/>
</dbReference>
<dbReference type="GO" id="GO:0051775">
    <property type="term" value="P:response to redox state"/>
    <property type="evidence" value="ECO:0007669"/>
    <property type="project" value="InterPro"/>
</dbReference>
<dbReference type="Gene3D" id="3.40.50.720">
    <property type="entry name" value="NAD(P)-binding Rossmann-like Domain"/>
    <property type="match status" value="1"/>
</dbReference>
<dbReference type="Gene3D" id="1.10.10.10">
    <property type="entry name" value="Winged helix-like DNA-binding domain superfamily/Winged helix DNA-binding domain"/>
    <property type="match status" value="1"/>
</dbReference>
<dbReference type="HAMAP" id="MF_01131">
    <property type="entry name" value="Rex"/>
    <property type="match status" value="1"/>
</dbReference>
<dbReference type="InterPro" id="IPR003781">
    <property type="entry name" value="CoA-bd"/>
</dbReference>
<dbReference type="InterPro" id="IPR036291">
    <property type="entry name" value="NAD(P)-bd_dom_sf"/>
</dbReference>
<dbReference type="InterPro" id="IPR009718">
    <property type="entry name" value="Rex_DNA-bd_C_dom"/>
</dbReference>
<dbReference type="InterPro" id="IPR022876">
    <property type="entry name" value="Tscrpt_rep_Rex"/>
</dbReference>
<dbReference type="InterPro" id="IPR036388">
    <property type="entry name" value="WH-like_DNA-bd_sf"/>
</dbReference>
<dbReference type="InterPro" id="IPR036390">
    <property type="entry name" value="WH_DNA-bd_sf"/>
</dbReference>
<dbReference type="NCBIfam" id="NF003988">
    <property type="entry name" value="PRK05472.1-1"/>
    <property type="match status" value="1"/>
</dbReference>
<dbReference type="NCBIfam" id="NF003989">
    <property type="entry name" value="PRK05472.1-3"/>
    <property type="match status" value="1"/>
</dbReference>
<dbReference type="NCBIfam" id="NF003991">
    <property type="entry name" value="PRK05472.1-5"/>
    <property type="match status" value="1"/>
</dbReference>
<dbReference type="NCBIfam" id="NF003994">
    <property type="entry name" value="PRK05472.2-3"/>
    <property type="match status" value="1"/>
</dbReference>
<dbReference type="NCBIfam" id="NF003995">
    <property type="entry name" value="PRK05472.2-4"/>
    <property type="match status" value="1"/>
</dbReference>
<dbReference type="NCBIfam" id="NF003996">
    <property type="entry name" value="PRK05472.2-5"/>
    <property type="match status" value="1"/>
</dbReference>
<dbReference type="PANTHER" id="PTHR35786">
    <property type="entry name" value="REDOX-SENSING TRANSCRIPTIONAL REPRESSOR REX"/>
    <property type="match status" value="1"/>
</dbReference>
<dbReference type="PANTHER" id="PTHR35786:SF1">
    <property type="entry name" value="REDOX-SENSING TRANSCRIPTIONAL REPRESSOR REX 1"/>
    <property type="match status" value="1"/>
</dbReference>
<dbReference type="Pfam" id="PF02629">
    <property type="entry name" value="CoA_binding"/>
    <property type="match status" value="1"/>
</dbReference>
<dbReference type="Pfam" id="PF06971">
    <property type="entry name" value="Put_DNA-bind_N"/>
    <property type="match status" value="1"/>
</dbReference>
<dbReference type="SMART" id="SM00881">
    <property type="entry name" value="CoA_binding"/>
    <property type="match status" value="1"/>
</dbReference>
<dbReference type="SUPFAM" id="SSF51735">
    <property type="entry name" value="NAD(P)-binding Rossmann-fold domains"/>
    <property type="match status" value="1"/>
</dbReference>
<dbReference type="SUPFAM" id="SSF46785">
    <property type="entry name" value="Winged helix' DNA-binding domain"/>
    <property type="match status" value="1"/>
</dbReference>
<gene>
    <name evidence="1" type="primary">rex</name>
    <name type="ordered locus">M6_Spy0840</name>
</gene>
<evidence type="ECO:0000255" key="1">
    <source>
        <dbReference type="HAMAP-Rule" id="MF_01131"/>
    </source>
</evidence>
<keyword id="KW-0963">Cytoplasm</keyword>
<keyword id="KW-0238">DNA-binding</keyword>
<keyword id="KW-0520">NAD</keyword>
<keyword id="KW-0678">Repressor</keyword>
<keyword id="KW-0804">Transcription</keyword>
<keyword id="KW-0805">Transcription regulation</keyword>
<accession>Q5XC88</accession>
<sequence>MVIDKSIPKATAKRLSLYYRIFKRFHADQVEKASSKQIADAMGIDSATVRRDFSYFGELGRRGFGYDVTKLMNFFADLLNDHSTTNVILVGCGNIGRALLHYRFHDRNKMQIAMGFDTDDNALVGTKTADNIPVHGISSVKERIANTDIETAILTVPSIHAQEVTDQLIEAGIKGILSFAPVHLQVPKGVIVQSVDLTSELQTLLYFMNQNHLD</sequence>
<proteinExistence type="inferred from homology"/>
<protein>
    <recommendedName>
        <fullName evidence="1">Redox-sensing transcriptional repressor Rex</fullName>
    </recommendedName>
</protein>
<name>REX_STRP6</name>
<reference key="1">
    <citation type="journal article" date="2004" name="J. Infect. Dis.">
        <title>Progress toward characterization of the group A Streptococcus metagenome: complete genome sequence of a macrolide-resistant serotype M6 strain.</title>
        <authorList>
            <person name="Banks D.J."/>
            <person name="Porcella S.F."/>
            <person name="Barbian K.D."/>
            <person name="Beres S.B."/>
            <person name="Philips L.E."/>
            <person name="Voyich J.M."/>
            <person name="DeLeo F.R."/>
            <person name="Martin J.M."/>
            <person name="Somerville G.A."/>
            <person name="Musser J.M."/>
        </authorList>
    </citation>
    <scope>NUCLEOTIDE SEQUENCE [LARGE SCALE GENOMIC DNA]</scope>
    <source>
        <strain>ATCC BAA-946 / MGAS10394</strain>
    </source>
</reference>
<feature type="chain" id="PRO_0000097922" description="Redox-sensing transcriptional repressor Rex">
    <location>
        <begin position="1"/>
        <end position="214"/>
    </location>
</feature>
<feature type="DNA-binding region" description="H-T-H motif" evidence="1">
    <location>
        <begin position="17"/>
        <end position="56"/>
    </location>
</feature>
<feature type="binding site" evidence="1">
    <location>
        <begin position="91"/>
        <end position="96"/>
    </location>
    <ligand>
        <name>NAD(+)</name>
        <dbReference type="ChEBI" id="CHEBI:57540"/>
    </ligand>
</feature>